<name>YM1_MDBVW</name>
<protein>
    <recommendedName>
        <fullName>Uncharacterized protein M1</fullName>
    </recommendedName>
</protein>
<feature type="chain" id="PRO_0000405400" description="Uncharacterized protein M1">
    <location>
        <begin position="1"/>
        <end position="111"/>
    </location>
</feature>
<feature type="region of interest" description="Disordered" evidence="1">
    <location>
        <begin position="1"/>
        <end position="85"/>
    </location>
</feature>
<feature type="compositionally biased region" description="Polar residues" evidence="1">
    <location>
        <begin position="11"/>
        <end position="23"/>
    </location>
</feature>
<feature type="compositionally biased region" description="Low complexity" evidence="1">
    <location>
        <begin position="24"/>
        <end position="42"/>
    </location>
</feature>
<feature type="compositionally biased region" description="Polar residues" evidence="1">
    <location>
        <begin position="56"/>
        <end position="77"/>
    </location>
</feature>
<accession>Q5I135</accession>
<dbReference type="EMBL" id="AY875688">
    <property type="protein sequence ID" value="AAW51798.1"/>
    <property type="molecule type" value="Genomic_DNA"/>
</dbReference>
<dbReference type="RefSeq" id="YP_239393.1">
    <property type="nucleotide sequence ID" value="NC_007038.1"/>
</dbReference>
<dbReference type="SMR" id="Q5I135"/>
<dbReference type="KEGG" id="vg:5075828"/>
<dbReference type="Proteomes" id="UP000008168">
    <property type="component" value="Genome"/>
</dbReference>
<organismHost>
    <name type="scientific">Microplitis demolitor</name>
    <name type="common">Parasitoid wasp</name>
    <dbReference type="NCBI Taxonomy" id="69319"/>
</organismHost>
<gene>
    <name type="primary">M1</name>
</gene>
<reference key="1">
    <citation type="journal article" date="2006" name="Virology">
        <title>Polydnavirus genomes reflect their dual roles as mutualists and pathogens.</title>
        <authorList>
            <person name="Webb B.A."/>
            <person name="Strand M.R."/>
            <person name="Dickey S.E."/>
            <person name="Beck M.H."/>
            <person name="Hilgarth R.S."/>
            <person name="Barney W.E."/>
            <person name="Kadash K."/>
            <person name="Kroemer J.A."/>
            <person name="Lindstrom K.G."/>
            <person name="Rattanadechakul W."/>
            <person name="Shelby K.S."/>
            <person name="Thoetkiattikul H."/>
            <person name="Turnbull M.W."/>
            <person name="Witherell R.A."/>
        </authorList>
    </citation>
    <scope>NUCLEOTIDE SEQUENCE [GENOMIC DNA]</scope>
</reference>
<evidence type="ECO:0000256" key="1">
    <source>
        <dbReference type="SAM" id="MobiDB-lite"/>
    </source>
</evidence>
<proteinExistence type="predicted"/>
<organism>
    <name type="scientific">Microplitis demolitor bracovirus (isolate Webb)</name>
    <name type="common">MdBV</name>
    <dbReference type="NCBI Taxonomy" id="654919"/>
    <lineage>
        <taxon>Viruses</taxon>
        <taxon>Viruses incertae sedis</taxon>
        <taxon>Polydnaviriformidae</taxon>
        <taxon>Bracoviriform</taxon>
        <taxon>Microplitis demolitor bracovirus</taxon>
    </lineage>
</organism>
<sequence>MTGLMKAFQKLSPTKRQYAEITQSNSSISSSSSGSKYNDSSSGRYTPLSEEGRTSARASTSTQAQKPASSQQKGGTSSREDEQKLLRKLQTTFGEASNLLNEYVDMRSRKK</sequence>
<keyword id="KW-1185">Reference proteome</keyword>